<keyword id="KW-0067">ATP-binding</keyword>
<keyword id="KW-0418">Kinase</keyword>
<keyword id="KW-0460">Magnesium</keyword>
<keyword id="KW-0479">Metal-binding</keyword>
<keyword id="KW-0547">Nucleotide-binding</keyword>
<keyword id="KW-0784">Thiamine biosynthesis</keyword>
<keyword id="KW-0808">Transferase</keyword>
<dbReference type="EC" id="2.7.1.50" evidence="1"/>
<dbReference type="EMBL" id="CP001172">
    <property type="protein sequence ID" value="ACJ58319.1"/>
    <property type="molecule type" value="Genomic_DNA"/>
</dbReference>
<dbReference type="RefSeq" id="WP_001089458.1">
    <property type="nucleotide sequence ID" value="NZ_CP001172.1"/>
</dbReference>
<dbReference type="SMR" id="B7H160"/>
<dbReference type="HOGENOM" id="CLU_019943_0_1_6"/>
<dbReference type="UniPathway" id="UPA00060">
    <property type="reaction ID" value="UER00139"/>
</dbReference>
<dbReference type="Proteomes" id="UP000006924">
    <property type="component" value="Chromosome"/>
</dbReference>
<dbReference type="GO" id="GO:0005524">
    <property type="term" value="F:ATP binding"/>
    <property type="evidence" value="ECO:0007669"/>
    <property type="project" value="UniProtKB-UniRule"/>
</dbReference>
<dbReference type="GO" id="GO:0004417">
    <property type="term" value="F:hydroxyethylthiazole kinase activity"/>
    <property type="evidence" value="ECO:0007669"/>
    <property type="project" value="UniProtKB-UniRule"/>
</dbReference>
<dbReference type="GO" id="GO:0000287">
    <property type="term" value="F:magnesium ion binding"/>
    <property type="evidence" value="ECO:0007669"/>
    <property type="project" value="UniProtKB-UniRule"/>
</dbReference>
<dbReference type="GO" id="GO:0009228">
    <property type="term" value="P:thiamine biosynthetic process"/>
    <property type="evidence" value="ECO:0007669"/>
    <property type="project" value="UniProtKB-KW"/>
</dbReference>
<dbReference type="GO" id="GO:0009229">
    <property type="term" value="P:thiamine diphosphate biosynthetic process"/>
    <property type="evidence" value="ECO:0007669"/>
    <property type="project" value="UniProtKB-UniRule"/>
</dbReference>
<dbReference type="CDD" id="cd01170">
    <property type="entry name" value="THZ_kinase"/>
    <property type="match status" value="1"/>
</dbReference>
<dbReference type="Gene3D" id="3.40.1190.20">
    <property type="match status" value="1"/>
</dbReference>
<dbReference type="HAMAP" id="MF_00228">
    <property type="entry name" value="Thz_kinase"/>
    <property type="match status" value="1"/>
</dbReference>
<dbReference type="InterPro" id="IPR000417">
    <property type="entry name" value="Hyethyz_kinase"/>
</dbReference>
<dbReference type="InterPro" id="IPR029056">
    <property type="entry name" value="Ribokinase-like"/>
</dbReference>
<dbReference type="NCBIfam" id="NF006830">
    <property type="entry name" value="PRK09355.1"/>
    <property type="match status" value="1"/>
</dbReference>
<dbReference type="Pfam" id="PF02110">
    <property type="entry name" value="HK"/>
    <property type="match status" value="1"/>
</dbReference>
<dbReference type="PIRSF" id="PIRSF000513">
    <property type="entry name" value="Thz_kinase"/>
    <property type="match status" value="1"/>
</dbReference>
<dbReference type="PRINTS" id="PR01099">
    <property type="entry name" value="HYETHTZKNASE"/>
</dbReference>
<dbReference type="SUPFAM" id="SSF53613">
    <property type="entry name" value="Ribokinase-like"/>
    <property type="match status" value="1"/>
</dbReference>
<proteinExistence type="inferred from homology"/>
<sequence>MNSTSNLIEQVIEAWQNMQAKTPLVQCITNSVAANYTANVLLASGASPAMIDNPYEAESFTKISSALSINLGTPTSEQMQAMQISAKTAQLNNVPWVLDPVGYGPILAWRSQMTDELLQFKPSVIRGNASEISTLAGNQVQSKGVDSTLSSDQAYQQAFSLLTHASCIAISGESDYILSNEVDAVIQVNGGSPLQPKITATGCALGALIAAYSAVTTPTIAALSAHIHFAIAGKLAANQAQTMGSFSSIFMDYIHMLDANLIEQYADVKLLNKQA</sequence>
<reference key="1">
    <citation type="journal article" date="2008" name="J. Bacteriol.">
        <title>Comparative genome sequence analysis of multidrug-resistant Acinetobacter baumannii.</title>
        <authorList>
            <person name="Adams M.D."/>
            <person name="Goglin K."/>
            <person name="Molyneaux N."/>
            <person name="Hujer K.M."/>
            <person name="Lavender H."/>
            <person name="Jamison J.J."/>
            <person name="MacDonald I.J."/>
            <person name="Martin K.M."/>
            <person name="Russo T."/>
            <person name="Campagnari A.A."/>
            <person name="Hujer A.M."/>
            <person name="Bonomo R.A."/>
            <person name="Gill S.R."/>
        </authorList>
    </citation>
    <scope>NUCLEOTIDE SEQUENCE [LARGE SCALE GENOMIC DNA]</scope>
    <source>
        <strain>AB307-0294</strain>
    </source>
</reference>
<protein>
    <recommendedName>
        <fullName evidence="1">Hydroxyethylthiazole kinase</fullName>
        <ecNumber evidence="1">2.7.1.50</ecNumber>
    </recommendedName>
    <alternativeName>
        <fullName evidence="1">4-methyl-5-beta-hydroxyethylthiazole kinase</fullName>
        <shortName evidence="1">TH kinase</shortName>
        <shortName evidence="1">Thz kinase</shortName>
    </alternativeName>
</protein>
<feature type="chain" id="PRO_0000383811" description="Hydroxyethylthiazole kinase">
    <location>
        <begin position="1"/>
        <end position="275"/>
    </location>
</feature>
<feature type="binding site" evidence="1">
    <location>
        <position position="50"/>
    </location>
    <ligand>
        <name>substrate</name>
    </ligand>
</feature>
<feature type="binding site" evidence="1">
    <location>
        <position position="126"/>
    </location>
    <ligand>
        <name>ATP</name>
        <dbReference type="ChEBI" id="CHEBI:30616"/>
    </ligand>
</feature>
<feature type="binding site" evidence="1">
    <location>
        <position position="171"/>
    </location>
    <ligand>
        <name>ATP</name>
        <dbReference type="ChEBI" id="CHEBI:30616"/>
    </ligand>
</feature>
<feature type="binding site" evidence="1">
    <location>
        <position position="200"/>
    </location>
    <ligand>
        <name>substrate</name>
    </ligand>
</feature>
<gene>
    <name evidence="1" type="primary">thiM</name>
    <name type="ordered locus">ABBFA_001371</name>
</gene>
<evidence type="ECO:0000255" key="1">
    <source>
        <dbReference type="HAMAP-Rule" id="MF_00228"/>
    </source>
</evidence>
<accession>B7H160</accession>
<organism>
    <name type="scientific">Acinetobacter baumannii (strain AB307-0294)</name>
    <dbReference type="NCBI Taxonomy" id="557600"/>
    <lineage>
        <taxon>Bacteria</taxon>
        <taxon>Pseudomonadati</taxon>
        <taxon>Pseudomonadota</taxon>
        <taxon>Gammaproteobacteria</taxon>
        <taxon>Moraxellales</taxon>
        <taxon>Moraxellaceae</taxon>
        <taxon>Acinetobacter</taxon>
        <taxon>Acinetobacter calcoaceticus/baumannii complex</taxon>
    </lineage>
</organism>
<comment type="function">
    <text evidence="1">Catalyzes the phosphorylation of the hydroxyl group of 4-methyl-5-beta-hydroxyethylthiazole (THZ).</text>
</comment>
<comment type="catalytic activity">
    <reaction evidence="1">
        <text>5-(2-hydroxyethyl)-4-methylthiazole + ATP = 4-methyl-5-(2-phosphooxyethyl)-thiazole + ADP + H(+)</text>
        <dbReference type="Rhea" id="RHEA:24212"/>
        <dbReference type="ChEBI" id="CHEBI:15378"/>
        <dbReference type="ChEBI" id="CHEBI:17957"/>
        <dbReference type="ChEBI" id="CHEBI:30616"/>
        <dbReference type="ChEBI" id="CHEBI:58296"/>
        <dbReference type="ChEBI" id="CHEBI:456216"/>
        <dbReference type="EC" id="2.7.1.50"/>
    </reaction>
</comment>
<comment type="cofactor">
    <cofactor evidence="1">
        <name>Mg(2+)</name>
        <dbReference type="ChEBI" id="CHEBI:18420"/>
    </cofactor>
</comment>
<comment type="pathway">
    <text evidence="1">Cofactor biosynthesis; thiamine diphosphate biosynthesis; 4-methyl-5-(2-phosphoethyl)-thiazole from 5-(2-hydroxyethyl)-4-methylthiazole: step 1/1.</text>
</comment>
<comment type="similarity">
    <text evidence="1">Belongs to the Thz kinase family.</text>
</comment>
<name>THIM_ACIB3</name>